<keyword id="KW-1003">Cell membrane</keyword>
<keyword id="KW-0449">Lipoprotein</keyword>
<keyword id="KW-0472">Membrane</keyword>
<keyword id="KW-0564">Palmitate</keyword>
<keyword id="KW-1185">Reference proteome</keyword>
<keyword id="KW-0732">Signal</keyword>
<gene>
    <name type="ordered locus">MPN_363</name>
    <name type="ORF">H91_orf102</name>
    <name type="ORF">MP473</name>
</gene>
<reference key="1">
    <citation type="journal article" date="1996" name="Nucleic Acids Res.">
        <title>Complete sequence analysis of the genome of the bacterium Mycoplasma pneumoniae.</title>
        <authorList>
            <person name="Himmelreich R."/>
            <person name="Hilbert H."/>
            <person name="Plagens H."/>
            <person name="Pirkl E."/>
            <person name="Li B.-C."/>
            <person name="Herrmann R."/>
        </authorList>
    </citation>
    <scope>NUCLEOTIDE SEQUENCE [LARGE SCALE GENOMIC DNA]</scope>
    <source>
        <strain>ATCC 29342 / M129 / Subtype 1</strain>
    </source>
</reference>
<feature type="signal peptide" evidence="1">
    <location>
        <begin position="1"/>
        <end position="22"/>
    </location>
</feature>
<feature type="chain" id="PRO_0000018732" description="Uncharacterized lipoprotein MPN_363">
    <location>
        <begin position="23"/>
        <end position="102"/>
    </location>
</feature>
<feature type="lipid moiety-binding region" description="N-palmitoyl cysteine" evidence="1">
    <location>
        <position position="23"/>
    </location>
</feature>
<feature type="lipid moiety-binding region" description="S-diacylglycerol cysteine" evidence="1">
    <location>
        <position position="23"/>
    </location>
</feature>
<organism>
    <name type="scientific">Mycoplasma pneumoniae (strain ATCC 29342 / M129 / Subtype 1)</name>
    <name type="common">Mycoplasmoides pneumoniae</name>
    <dbReference type="NCBI Taxonomy" id="272634"/>
    <lineage>
        <taxon>Bacteria</taxon>
        <taxon>Bacillati</taxon>
        <taxon>Mycoplasmatota</taxon>
        <taxon>Mycoplasmoidales</taxon>
        <taxon>Mycoplasmoidaceae</taxon>
        <taxon>Mycoplasmoides</taxon>
    </lineage>
</organism>
<protein>
    <recommendedName>
        <fullName>Uncharacterized lipoprotein MPN_363</fullName>
    </recommendedName>
</protein>
<accession>P75418</accession>
<comment type="subcellular location">
    <subcellularLocation>
        <location evidence="1">Cell membrane</location>
        <topology evidence="1">Lipid-anchor</topology>
    </subcellularLocation>
</comment>
<comment type="similarity">
    <text evidence="2">Belongs to the MG185/MG260 family.</text>
</comment>
<sequence>MKFKYGATLFSGFLGLSAILAACGAKGKFDQVDDGKIVLASSLTSKNAANALQAVVEKYNQVKGGNDYPIEITQITGGYDGGRGNLQTKLSVKDKTTFYNLI</sequence>
<proteinExistence type="inferred from homology"/>
<dbReference type="EMBL" id="U00089">
    <property type="protein sequence ID" value="AAB96121.1"/>
    <property type="molecule type" value="Genomic_DNA"/>
</dbReference>
<dbReference type="PIR" id="S73799">
    <property type="entry name" value="S73799"/>
</dbReference>
<dbReference type="RefSeq" id="NP_110051.1">
    <property type="nucleotide sequence ID" value="NC_000912.1"/>
</dbReference>
<dbReference type="IntAct" id="P75418">
    <property type="interactions" value="1"/>
</dbReference>
<dbReference type="STRING" id="272634.MPN_363"/>
<dbReference type="EnsemblBacteria" id="AAB96121">
    <property type="protein sequence ID" value="AAB96121"/>
    <property type="gene ID" value="MPN_363"/>
</dbReference>
<dbReference type="KEGG" id="mpn:MPN_363"/>
<dbReference type="PATRIC" id="fig|272634.6.peg.390"/>
<dbReference type="HOGENOM" id="CLU_2274259_0_0_14"/>
<dbReference type="OrthoDB" id="393769at2"/>
<dbReference type="BioCyc" id="MPNE272634:G1GJ3-572-MONOMER"/>
<dbReference type="Proteomes" id="UP000000808">
    <property type="component" value="Chromosome"/>
</dbReference>
<dbReference type="GO" id="GO:0005886">
    <property type="term" value="C:plasma membrane"/>
    <property type="evidence" value="ECO:0007669"/>
    <property type="project" value="UniProtKB-SubCell"/>
</dbReference>
<dbReference type="PROSITE" id="PS51257">
    <property type="entry name" value="PROKAR_LIPOPROTEIN"/>
    <property type="match status" value="1"/>
</dbReference>
<evidence type="ECO:0000255" key="1">
    <source>
        <dbReference type="PROSITE-ProRule" id="PRU00303"/>
    </source>
</evidence>
<evidence type="ECO:0000305" key="2"/>
<name>Y363_MYCPN</name>